<sequence length="106" mass="12173">MNDSEFHRLADALWLTIEERLDSWDGDSDIDCEINGGVLTLSFENGSKIIINRQEPLHQVWLATKQGGYHFDLKGDEWICDRSGETFWELLEQAATQQAGEKVSFR</sequence>
<protein>
    <recommendedName>
        <fullName evidence="1">Iron-sulfur cluster assembly protein CyaY</fullName>
    </recommendedName>
</protein>
<name>CYAY_SALPB</name>
<comment type="function">
    <text evidence="1">Involved in iron-sulfur (Fe-S) cluster assembly. May act as a regulator of Fe-S biogenesis.</text>
</comment>
<comment type="similarity">
    <text evidence="1">Belongs to the frataxin family.</text>
</comment>
<feature type="chain" id="PRO_1000076550" description="Iron-sulfur cluster assembly protein CyaY">
    <location>
        <begin position="1"/>
        <end position="106"/>
    </location>
</feature>
<evidence type="ECO:0000255" key="1">
    <source>
        <dbReference type="HAMAP-Rule" id="MF_00142"/>
    </source>
</evidence>
<gene>
    <name evidence="1" type="primary">cyaY</name>
    <name type="ordered locus">SPAB_04893</name>
</gene>
<organism>
    <name type="scientific">Salmonella paratyphi B (strain ATCC BAA-1250 / SPB7)</name>
    <dbReference type="NCBI Taxonomy" id="1016998"/>
    <lineage>
        <taxon>Bacteria</taxon>
        <taxon>Pseudomonadati</taxon>
        <taxon>Pseudomonadota</taxon>
        <taxon>Gammaproteobacteria</taxon>
        <taxon>Enterobacterales</taxon>
        <taxon>Enterobacteriaceae</taxon>
        <taxon>Salmonella</taxon>
    </lineage>
</organism>
<dbReference type="EMBL" id="CP000886">
    <property type="protein sequence ID" value="ABX70192.1"/>
    <property type="molecule type" value="Genomic_DNA"/>
</dbReference>
<dbReference type="RefSeq" id="WP_000999929.1">
    <property type="nucleotide sequence ID" value="NC_010102.1"/>
</dbReference>
<dbReference type="SMR" id="A9MY64"/>
<dbReference type="KEGG" id="spq:SPAB_04893"/>
<dbReference type="PATRIC" id="fig|1016998.12.peg.4595"/>
<dbReference type="HOGENOM" id="CLU_080880_3_0_6"/>
<dbReference type="BioCyc" id="SENT1016998:SPAB_RS19895-MONOMER"/>
<dbReference type="Proteomes" id="UP000008556">
    <property type="component" value="Chromosome"/>
</dbReference>
<dbReference type="GO" id="GO:0005829">
    <property type="term" value="C:cytosol"/>
    <property type="evidence" value="ECO:0007669"/>
    <property type="project" value="TreeGrafter"/>
</dbReference>
<dbReference type="GO" id="GO:0008199">
    <property type="term" value="F:ferric iron binding"/>
    <property type="evidence" value="ECO:0007669"/>
    <property type="project" value="InterPro"/>
</dbReference>
<dbReference type="GO" id="GO:0008198">
    <property type="term" value="F:ferrous iron binding"/>
    <property type="evidence" value="ECO:0007669"/>
    <property type="project" value="TreeGrafter"/>
</dbReference>
<dbReference type="GO" id="GO:0016226">
    <property type="term" value="P:iron-sulfur cluster assembly"/>
    <property type="evidence" value="ECO:0007669"/>
    <property type="project" value="UniProtKB-UniRule"/>
</dbReference>
<dbReference type="CDD" id="cd00503">
    <property type="entry name" value="Frataxin"/>
    <property type="match status" value="1"/>
</dbReference>
<dbReference type="FunFam" id="3.30.920.10:FF:000001">
    <property type="entry name" value="Iron-sulfur cluster assembly protein CyaY"/>
    <property type="match status" value="1"/>
</dbReference>
<dbReference type="Gene3D" id="3.30.920.10">
    <property type="entry name" value="Frataxin/CyaY"/>
    <property type="match status" value="1"/>
</dbReference>
<dbReference type="HAMAP" id="MF_00142">
    <property type="entry name" value="CyaY"/>
    <property type="match status" value="1"/>
</dbReference>
<dbReference type="InterPro" id="IPR047584">
    <property type="entry name" value="CyaY"/>
</dbReference>
<dbReference type="InterPro" id="IPR002908">
    <property type="entry name" value="Frataxin/CyaY"/>
</dbReference>
<dbReference type="InterPro" id="IPR036524">
    <property type="entry name" value="Frataxin/CyaY_sf"/>
</dbReference>
<dbReference type="InterPro" id="IPR020895">
    <property type="entry name" value="Frataxin_CS"/>
</dbReference>
<dbReference type="NCBIfam" id="TIGR03421">
    <property type="entry name" value="FeS_CyaY"/>
    <property type="match status" value="1"/>
</dbReference>
<dbReference type="PANTHER" id="PTHR16821">
    <property type="entry name" value="FRATAXIN"/>
    <property type="match status" value="1"/>
</dbReference>
<dbReference type="PANTHER" id="PTHR16821:SF2">
    <property type="entry name" value="FRATAXIN, MITOCHONDRIAL"/>
    <property type="match status" value="1"/>
</dbReference>
<dbReference type="Pfam" id="PF01491">
    <property type="entry name" value="Frataxin_Cyay"/>
    <property type="match status" value="1"/>
</dbReference>
<dbReference type="SMART" id="SM01219">
    <property type="entry name" value="Frataxin_Cyay"/>
    <property type="match status" value="1"/>
</dbReference>
<dbReference type="SUPFAM" id="SSF55387">
    <property type="entry name" value="Frataxin/Nqo15-like"/>
    <property type="match status" value="1"/>
</dbReference>
<dbReference type="PROSITE" id="PS01344">
    <property type="entry name" value="FRATAXIN_1"/>
    <property type="match status" value="1"/>
</dbReference>
<dbReference type="PROSITE" id="PS50810">
    <property type="entry name" value="FRATAXIN_2"/>
    <property type="match status" value="1"/>
</dbReference>
<accession>A9MY64</accession>
<reference key="1">
    <citation type="submission" date="2007-11" db="EMBL/GenBank/DDBJ databases">
        <authorList>
            <consortium name="The Salmonella enterica serovar Paratyphi B Genome Sequencing Project"/>
            <person name="McClelland M."/>
            <person name="Sanderson E.K."/>
            <person name="Porwollik S."/>
            <person name="Spieth J."/>
            <person name="Clifton W.S."/>
            <person name="Fulton R."/>
            <person name="Cordes M."/>
            <person name="Wollam A."/>
            <person name="Shah N."/>
            <person name="Pepin K."/>
            <person name="Bhonagiri V."/>
            <person name="Nash W."/>
            <person name="Johnson M."/>
            <person name="Thiruvilangam P."/>
            <person name="Wilson R."/>
        </authorList>
    </citation>
    <scope>NUCLEOTIDE SEQUENCE [LARGE SCALE GENOMIC DNA]</scope>
    <source>
        <strain>ATCC BAA-1250 / SPB7</strain>
    </source>
</reference>
<keyword id="KW-0408">Iron</keyword>
<keyword id="KW-0479">Metal-binding</keyword>
<proteinExistence type="inferred from homology"/>